<gene>
    <name type="primary">DYNC1LI1</name>
    <name type="synonym">DNCLI1</name>
</gene>
<dbReference type="EMBL" id="X79088">
    <property type="protein sequence ID" value="CAA55698.1"/>
    <property type="molecule type" value="mRNA"/>
</dbReference>
<dbReference type="PIR" id="I50637">
    <property type="entry name" value="I50637"/>
</dbReference>
<dbReference type="RefSeq" id="NP_001161209.1">
    <property type="nucleotide sequence ID" value="NM_001167737.2"/>
</dbReference>
<dbReference type="SMR" id="Q90828"/>
<dbReference type="BioGRID" id="681601">
    <property type="interactions" value="1"/>
</dbReference>
<dbReference type="FunCoup" id="Q90828">
    <property type="interactions" value="2725"/>
</dbReference>
<dbReference type="STRING" id="9031.ENSGALP00000018705"/>
<dbReference type="iPTMnet" id="Q90828"/>
<dbReference type="PaxDb" id="9031-ENSGALP00000018705"/>
<dbReference type="GeneID" id="420668"/>
<dbReference type="KEGG" id="gga:420668"/>
<dbReference type="CTD" id="51143"/>
<dbReference type="VEuPathDB" id="HostDB:geneid_420668"/>
<dbReference type="eggNOG" id="KOG3905">
    <property type="taxonomic scope" value="Eukaryota"/>
</dbReference>
<dbReference type="HOGENOM" id="CLU_021937_2_1_1"/>
<dbReference type="InParanoid" id="Q90828"/>
<dbReference type="OMA" id="RCNIWIL"/>
<dbReference type="OrthoDB" id="27603at2759"/>
<dbReference type="PhylomeDB" id="Q90828"/>
<dbReference type="TreeFam" id="TF352602"/>
<dbReference type="Reactome" id="R-GGA-141444">
    <property type="pathway name" value="Amplification of signal from unattached kinetochores via a MAD2 inhibitory signal"/>
</dbReference>
<dbReference type="Reactome" id="R-GGA-2467813">
    <property type="pathway name" value="Separation of Sister Chromatids"/>
</dbReference>
<dbReference type="Reactome" id="R-GGA-2500257">
    <property type="pathway name" value="Resolution of Sister Chromatid Cohesion"/>
</dbReference>
<dbReference type="Reactome" id="R-GGA-3371497">
    <property type="pathway name" value="HSP90 chaperone cycle for steroid hormone receptors (SHR) in the presence of ligand"/>
</dbReference>
<dbReference type="Reactome" id="R-GGA-5663220">
    <property type="pathway name" value="RHO GTPases Activate Formins"/>
</dbReference>
<dbReference type="Reactome" id="R-GGA-6798695">
    <property type="pathway name" value="Neutrophil degranulation"/>
</dbReference>
<dbReference type="Reactome" id="R-GGA-6807878">
    <property type="pathway name" value="COPI-mediated anterograde transport"/>
</dbReference>
<dbReference type="Reactome" id="R-GGA-6811436">
    <property type="pathway name" value="COPI-independent Golgi-to-ER retrograde traffic"/>
</dbReference>
<dbReference type="Reactome" id="R-GGA-9646399">
    <property type="pathway name" value="Aggrephagy"/>
</dbReference>
<dbReference type="Reactome" id="R-GGA-9648025">
    <property type="pathway name" value="EML4 and NUDC in mitotic spindle formation"/>
</dbReference>
<dbReference type="PRO" id="PR:Q90828"/>
<dbReference type="Proteomes" id="UP000000539">
    <property type="component" value="Chromosome 2"/>
</dbReference>
<dbReference type="Bgee" id="ENSGALG00000011491">
    <property type="expression patterns" value="Expressed in heart and 14 other cell types or tissues"/>
</dbReference>
<dbReference type="GO" id="GO:0005868">
    <property type="term" value="C:cytoplasmic dynein complex"/>
    <property type="evidence" value="ECO:0000318"/>
    <property type="project" value="GO_Central"/>
</dbReference>
<dbReference type="GO" id="GO:0030666">
    <property type="term" value="C:endocytic vesicle membrane"/>
    <property type="evidence" value="ECO:0000250"/>
    <property type="project" value="UniProtKB"/>
</dbReference>
<dbReference type="GO" id="GO:0000776">
    <property type="term" value="C:kinetochore"/>
    <property type="evidence" value="ECO:0007669"/>
    <property type="project" value="UniProtKB-KW"/>
</dbReference>
<dbReference type="GO" id="GO:0005874">
    <property type="term" value="C:microtubule"/>
    <property type="evidence" value="ECO:0007669"/>
    <property type="project" value="UniProtKB-KW"/>
</dbReference>
<dbReference type="GO" id="GO:0055038">
    <property type="term" value="C:recycling endosome membrane"/>
    <property type="evidence" value="ECO:0007669"/>
    <property type="project" value="UniProtKB-SubCell"/>
</dbReference>
<dbReference type="GO" id="GO:0000922">
    <property type="term" value="C:spindle pole"/>
    <property type="evidence" value="ECO:0007669"/>
    <property type="project" value="UniProtKB-SubCell"/>
</dbReference>
<dbReference type="GO" id="GO:0005524">
    <property type="term" value="F:ATP binding"/>
    <property type="evidence" value="ECO:0007669"/>
    <property type="project" value="UniProtKB-KW"/>
</dbReference>
<dbReference type="GO" id="GO:0045504">
    <property type="term" value="F:dynein heavy chain binding"/>
    <property type="evidence" value="ECO:0000318"/>
    <property type="project" value="GO_Central"/>
</dbReference>
<dbReference type="GO" id="GO:0000226">
    <property type="term" value="P:microtubule cytoskeleton organization"/>
    <property type="evidence" value="ECO:0000318"/>
    <property type="project" value="GO_Central"/>
</dbReference>
<dbReference type="GO" id="GO:0007018">
    <property type="term" value="P:microtubule-based movement"/>
    <property type="evidence" value="ECO:0000250"/>
    <property type="project" value="UniProtKB"/>
</dbReference>
<dbReference type="GO" id="GO:0060627">
    <property type="term" value="P:regulation of vesicle-mediated transport"/>
    <property type="evidence" value="ECO:0000250"/>
    <property type="project" value="UniProtKB"/>
</dbReference>
<dbReference type="CDD" id="cd00882">
    <property type="entry name" value="Ras_like_GTPase"/>
    <property type="match status" value="1"/>
</dbReference>
<dbReference type="Gene3D" id="3.40.50.300">
    <property type="entry name" value="P-loop containing nucleotide triphosphate hydrolases"/>
    <property type="match status" value="1"/>
</dbReference>
<dbReference type="InterPro" id="IPR008467">
    <property type="entry name" value="Dynein1_light_intermed_chain"/>
</dbReference>
<dbReference type="InterPro" id="IPR022780">
    <property type="entry name" value="Dynein_light_int_chain"/>
</dbReference>
<dbReference type="InterPro" id="IPR027417">
    <property type="entry name" value="P-loop_NTPase"/>
</dbReference>
<dbReference type="PANTHER" id="PTHR12688:SF2">
    <property type="entry name" value="CYTOPLASMIC DYNEIN 1 LIGHT INTERMEDIATE CHAIN 1"/>
    <property type="match status" value="1"/>
</dbReference>
<dbReference type="PANTHER" id="PTHR12688">
    <property type="entry name" value="DYNEIN LIGHT INTERMEDIATE CHAIN"/>
    <property type="match status" value="1"/>
</dbReference>
<dbReference type="Pfam" id="PF05783">
    <property type="entry name" value="DLIC"/>
    <property type="match status" value="1"/>
</dbReference>
<dbReference type="SUPFAM" id="SSF52540">
    <property type="entry name" value="P-loop containing nucleoside triphosphate hydrolases"/>
    <property type="match status" value="1"/>
</dbReference>
<accession>Q90828</accession>
<organism>
    <name type="scientific">Gallus gallus</name>
    <name type="common">Chicken</name>
    <dbReference type="NCBI Taxonomy" id="9031"/>
    <lineage>
        <taxon>Eukaryota</taxon>
        <taxon>Metazoa</taxon>
        <taxon>Chordata</taxon>
        <taxon>Craniata</taxon>
        <taxon>Vertebrata</taxon>
        <taxon>Euteleostomi</taxon>
        <taxon>Archelosauria</taxon>
        <taxon>Archosauria</taxon>
        <taxon>Dinosauria</taxon>
        <taxon>Saurischia</taxon>
        <taxon>Theropoda</taxon>
        <taxon>Coelurosauria</taxon>
        <taxon>Aves</taxon>
        <taxon>Neognathae</taxon>
        <taxon>Galloanserae</taxon>
        <taxon>Galliformes</taxon>
        <taxon>Phasianidae</taxon>
        <taxon>Phasianinae</taxon>
        <taxon>Gallus</taxon>
    </lineage>
</organism>
<name>DC1L1_CHICK</name>
<protein>
    <recommendedName>
        <fullName>Cytoplasmic dynein 1 light intermediate chain 1</fullName>
    </recommendedName>
    <alternativeName>
        <fullName>Dynein light chain A</fullName>
        <shortName>DLC-A</shortName>
    </alternativeName>
    <alternativeName>
        <fullName>Dynein light intermediate chain 1, cytosolic</fullName>
    </alternativeName>
    <alternativeName>
        <fullName>LIC57/59</fullName>
    </alternativeName>
</protein>
<feature type="chain" id="PRO_0000114669" description="Cytoplasmic dynein 1 light intermediate chain 1">
    <location>
        <begin position="1"/>
        <end position="515"/>
    </location>
</feature>
<feature type="region of interest" description="Disordered" evidence="4">
    <location>
        <begin position="1"/>
        <end position="34"/>
    </location>
</feature>
<feature type="region of interest" description="Disordered" evidence="4">
    <location>
        <begin position="370"/>
        <end position="424"/>
    </location>
</feature>
<feature type="region of interest" description="Disordered" evidence="4">
    <location>
        <begin position="445"/>
        <end position="515"/>
    </location>
</feature>
<feature type="compositionally biased region" description="Low complexity" evidence="4">
    <location>
        <begin position="1"/>
        <end position="24"/>
    </location>
</feature>
<feature type="compositionally biased region" description="Polar residues" evidence="4">
    <location>
        <begin position="397"/>
        <end position="409"/>
    </location>
</feature>
<feature type="compositionally biased region" description="Gly residues" evidence="4">
    <location>
        <begin position="448"/>
        <end position="468"/>
    </location>
</feature>
<feature type="compositionally biased region" description="Basic and acidic residues" evidence="4">
    <location>
        <begin position="490"/>
        <end position="499"/>
    </location>
</feature>
<feature type="compositionally biased region" description="Polar residues" evidence="4">
    <location>
        <begin position="502"/>
        <end position="515"/>
    </location>
</feature>
<feature type="binding site" evidence="3">
    <location>
        <begin position="64"/>
        <end position="71"/>
    </location>
    <ligand>
        <name>ATP</name>
        <dbReference type="ChEBI" id="CHEBI:30616"/>
    </ligand>
</feature>
<keyword id="KW-0067">ATP-binding</keyword>
<keyword id="KW-0137">Centromere</keyword>
<keyword id="KW-0158">Chromosome</keyword>
<keyword id="KW-0963">Cytoplasm</keyword>
<keyword id="KW-0206">Cytoskeleton</keyword>
<keyword id="KW-0903">Direct protein sequencing</keyword>
<keyword id="KW-0243">Dynein</keyword>
<keyword id="KW-0967">Endosome</keyword>
<keyword id="KW-0995">Kinetochore</keyword>
<keyword id="KW-0472">Membrane</keyword>
<keyword id="KW-0493">Microtubule</keyword>
<keyword id="KW-0505">Motor protein</keyword>
<keyword id="KW-0547">Nucleotide-binding</keyword>
<keyword id="KW-0597">Phosphoprotein</keyword>
<keyword id="KW-1185">Reference proteome</keyword>
<keyword id="KW-0813">Transport</keyword>
<sequence>MAAVGRAGSFGSSSASGAANNASAELRAGGEEDDGQNLWSCILSEVSTRSRSKLPSGKSVLLLGEDGAGKTSLIGKIQGIEEYKKGRGMEYLYLNVHDEDRDDQTRCNVRILDGDLYHKGLLKFAMEANSLKDTLIMLVVDMSRPWTAMDSLQKWASVVREHIDKLKIPPEEMKEMEQKLVRDFQEYVEPGEDFPASPQRRNTSLQEDKDDSVILPLGADTLTCNLGIPVVVVCTKCDAISVLEKEHDYRDEHFDFIQSHIRRFCLQYGAALIYTSVKENKNIDLVYKYIVQKLYGFPFNVPAVVVEKDAVFIPAGWDNDKKIGILHENFQTLKAEDSFEDSIRKPPVRKFVHEKEIVAEDDQVFLMKQQSQLAKQPPTAAGRPVDASPRVPGGSPRTPNRSVTSNVASVTPIPAGSKKIDPNMKAGATSEGVLANFFNSLLSKKTGSPGGPGGVGGSPGGGSAGGTGSNLPPSAKKSGQKPVLTDVQAELDRISRKPEMVSPTSPTSPTEGEAS</sequence>
<evidence type="ECO:0000250" key="1"/>
<evidence type="ECO:0000250" key="2">
    <source>
        <dbReference type="UniProtKB" id="Q9Y6G9"/>
    </source>
</evidence>
<evidence type="ECO:0000255" key="3"/>
<evidence type="ECO:0000256" key="4">
    <source>
        <dbReference type="SAM" id="MobiDB-lite"/>
    </source>
</evidence>
<evidence type="ECO:0000305" key="5"/>
<proteinExistence type="evidence at protein level"/>
<reference key="1">
    <citation type="journal article" date="1994" name="Mol. Biol. Cell">
        <title>Characterization of DLC-A and DLC-B, two families of cytoplasmic dynein light chain subunits.</title>
        <authorList>
            <person name="Gill S.R."/>
            <person name="Cleveland D.W."/>
            <person name="Schroer T.A."/>
        </authorList>
    </citation>
    <scope>NUCLEOTIDE SEQUENCE [MRNA]</scope>
    <scope>PROTEIN SEQUENCE OF 90-98</scope>
    <source>
        <tissue>Embryonic brain</tissue>
    </source>
</reference>
<comment type="function">
    <text evidence="1 2">Acts as one of several non-catalytic accessory components of the cytoplasmic dynein 1 complex that are thought to be involved in linking dynein to cargos and to adapter proteins that regulate dynein function. Cytoplasmic dynein 1 acts as a motor for the intracellular retrograde motility of vesicles and organelles along microtubules. May play a role in binding dynein to membranous organelles or chromosomes (By similarity). May regulate the movement of peripheral sorting endosomes along microtubule tracks toward the microtubule organizing center/centrosome, generating the endosomal recycling compartment (By similarity).</text>
</comment>
<comment type="subunit">
    <text evidence="1">Homodimer. The cytoplasmic dynein 1 complex consists of two catalytic heavy chains (HCs) and a number of non-catalytic subunits presented by intermediate chains (ICs) (By similarity).</text>
</comment>
<comment type="subcellular location">
    <subcellularLocation>
        <location evidence="1">Cytoplasm</location>
        <location evidence="1">Cytoskeleton</location>
    </subcellularLocation>
    <subcellularLocation>
        <location evidence="1">Cytoplasm</location>
    </subcellularLocation>
    <subcellularLocation>
        <location evidence="2">Chromosome</location>
        <location evidence="2">Centromere</location>
        <location evidence="2">Kinetochore</location>
    </subcellularLocation>
    <subcellularLocation>
        <location evidence="2">Cytoplasm</location>
        <location evidence="2">Cytoskeleton</location>
        <location evidence="2">Spindle pole</location>
    </subcellularLocation>
    <subcellularLocation>
        <location evidence="2">Recycling endosome membrane</location>
    </subcellularLocation>
</comment>
<comment type="PTM">
    <text>Phosphorylated.</text>
</comment>
<comment type="similarity">
    <text evidence="5">Belongs to the dynein light intermediate chain family.</text>
</comment>